<name>PROA_ECO27</name>
<comment type="function">
    <text evidence="1">Catalyzes the NADPH-dependent reduction of L-glutamate 5-phosphate into L-glutamate 5-semialdehyde and phosphate. The product spontaneously undergoes cyclization to form 1-pyrroline-5-carboxylate.</text>
</comment>
<comment type="catalytic activity">
    <reaction evidence="1">
        <text>L-glutamate 5-semialdehyde + phosphate + NADP(+) = L-glutamyl 5-phosphate + NADPH + H(+)</text>
        <dbReference type="Rhea" id="RHEA:19541"/>
        <dbReference type="ChEBI" id="CHEBI:15378"/>
        <dbReference type="ChEBI" id="CHEBI:43474"/>
        <dbReference type="ChEBI" id="CHEBI:57783"/>
        <dbReference type="ChEBI" id="CHEBI:58066"/>
        <dbReference type="ChEBI" id="CHEBI:58274"/>
        <dbReference type="ChEBI" id="CHEBI:58349"/>
        <dbReference type="EC" id="1.2.1.41"/>
    </reaction>
</comment>
<comment type="pathway">
    <text evidence="1">Amino-acid biosynthesis; L-proline biosynthesis; L-glutamate 5-semialdehyde from L-glutamate: step 2/2.</text>
</comment>
<comment type="subcellular location">
    <subcellularLocation>
        <location evidence="1">Cytoplasm</location>
    </subcellularLocation>
</comment>
<comment type="similarity">
    <text evidence="1">Belongs to the gamma-glutamyl phosphate reductase family.</text>
</comment>
<protein>
    <recommendedName>
        <fullName evidence="1">Gamma-glutamyl phosphate reductase</fullName>
        <shortName evidence="1">GPR</shortName>
        <ecNumber evidence="1">1.2.1.41</ecNumber>
    </recommendedName>
    <alternativeName>
        <fullName evidence="1">Glutamate-5-semialdehyde dehydrogenase</fullName>
    </alternativeName>
    <alternativeName>
        <fullName evidence="1">Glutamyl-gamma-semialdehyde dehydrogenase</fullName>
        <shortName evidence="1">GSA dehydrogenase</shortName>
    </alternativeName>
</protein>
<sequence length="417" mass="44634">MLEQMGIAAKQASYKLAQLSSREKNRVLEKIADELEAQSESILNANAQDVADARANGLSEAMLDRLALTPARLKGIADDVRQVCNLADPVGQVIDGGVLDSGLRLERRRVPLGVIGVIYEARPNVTVDVASLCLKTGNAVILRGGKETCRTNAATVAVIQDALKSCGLPAGAVQAIDNPDRALVSEMLRMDKYIDMLIPRGGAGLHKLCREQSTIPVITGGIGVCHIYVDESAEIAEALKVIVNAKTQRPSTCNTVETLLVNKNIADSFLPALSKQMAESSVTLHADVAALAQLQAGPAKVVAVKAEEYDDEFLSLDLNVKIVSDLDDAIAHIREHGTQHSDAILTRDMRNAQRFVNEVDSSAVYVNASTRFTDGGQFGLGAEVAVSTQKLHARGPMGLEALTTYKWIGIGDYTIRA</sequence>
<feature type="chain" id="PRO_1000193606" description="Gamma-glutamyl phosphate reductase">
    <location>
        <begin position="1"/>
        <end position="417"/>
    </location>
</feature>
<gene>
    <name evidence="1" type="primary">proA</name>
    <name type="ordered locus">E2348C_0236</name>
</gene>
<accession>B7UJD1</accession>
<keyword id="KW-0028">Amino-acid biosynthesis</keyword>
<keyword id="KW-0963">Cytoplasm</keyword>
<keyword id="KW-0521">NADP</keyword>
<keyword id="KW-0560">Oxidoreductase</keyword>
<keyword id="KW-0641">Proline biosynthesis</keyword>
<keyword id="KW-1185">Reference proteome</keyword>
<evidence type="ECO:0000255" key="1">
    <source>
        <dbReference type="HAMAP-Rule" id="MF_00412"/>
    </source>
</evidence>
<organism>
    <name type="scientific">Escherichia coli O127:H6 (strain E2348/69 / EPEC)</name>
    <dbReference type="NCBI Taxonomy" id="574521"/>
    <lineage>
        <taxon>Bacteria</taxon>
        <taxon>Pseudomonadati</taxon>
        <taxon>Pseudomonadota</taxon>
        <taxon>Gammaproteobacteria</taxon>
        <taxon>Enterobacterales</taxon>
        <taxon>Enterobacteriaceae</taxon>
        <taxon>Escherichia</taxon>
    </lineage>
</organism>
<reference key="1">
    <citation type="journal article" date="2009" name="J. Bacteriol.">
        <title>Complete genome sequence and comparative genome analysis of enteropathogenic Escherichia coli O127:H6 strain E2348/69.</title>
        <authorList>
            <person name="Iguchi A."/>
            <person name="Thomson N.R."/>
            <person name="Ogura Y."/>
            <person name="Saunders D."/>
            <person name="Ooka T."/>
            <person name="Henderson I.R."/>
            <person name="Harris D."/>
            <person name="Asadulghani M."/>
            <person name="Kurokawa K."/>
            <person name="Dean P."/>
            <person name="Kenny B."/>
            <person name="Quail M.A."/>
            <person name="Thurston S."/>
            <person name="Dougan G."/>
            <person name="Hayashi T."/>
            <person name="Parkhill J."/>
            <person name="Frankel G."/>
        </authorList>
    </citation>
    <scope>NUCLEOTIDE SEQUENCE [LARGE SCALE GENOMIC DNA]</scope>
    <source>
        <strain>E2348/69 / EPEC</strain>
    </source>
</reference>
<proteinExistence type="inferred from homology"/>
<dbReference type="EC" id="1.2.1.41" evidence="1"/>
<dbReference type="EMBL" id="FM180568">
    <property type="protein sequence ID" value="CAS07784.1"/>
    <property type="molecule type" value="Genomic_DNA"/>
</dbReference>
<dbReference type="RefSeq" id="WP_000893306.1">
    <property type="nucleotide sequence ID" value="NC_011601.1"/>
</dbReference>
<dbReference type="SMR" id="B7UJD1"/>
<dbReference type="KEGG" id="ecg:E2348C_0236"/>
<dbReference type="HOGENOM" id="CLU_030231_0_0_6"/>
<dbReference type="UniPathway" id="UPA00098">
    <property type="reaction ID" value="UER00360"/>
</dbReference>
<dbReference type="Proteomes" id="UP000008205">
    <property type="component" value="Chromosome"/>
</dbReference>
<dbReference type="GO" id="GO:0005737">
    <property type="term" value="C:cytoplasm"/>
    <property type="evidence" value="ECO:0007669"/>
    <property type="project" value="UniProtKB-SubCell"/>
</dbReference>
<dbReference type="GO" id="GO:0004350">
    <property type="term" value="F:glutamate-5-semialdehyde dehydrogenase activity"/>
    <property type="evidence" value="ECO:0007669"/>
    <property type="project" value="UniProtKB-UniRule"/>
</dbReference>
<dbReference type="GO" id="GO:0050661">
    <property type="term" value="F:NADP binding"/>
    <property type="evidence" value="ECO:0007669"/>
    <property type="project" value="InterPro"/>
</dbReference>
<dbReference type="GO" id="GO:0055129">
    <property type="term" value="P:L-proline biosynthetic process"/>
    <property type="evidence" value="ECO:0007669"/>
    <property type="project" value="UniProtKB-UniRule"/>
</dbReference>
<dbReference type="CDD" id="cd07079">
    <property type="entry name" value="ALDH_F18-19_ProA-GPR"/>
    <property type="match status" value="1"/>
</dbReference>
<dbReference type="FunFam" id="3.40.309.10:FF:000006">
    <property type="entry name" value="Gamma-glutamyl phosphate reductase"/>
    <property type="match status" value="1"/>
</dbReference>
<dbReference type="Gene3D" id="3.40.605.10">
    <property type="entry name" value="Aldehyde Dehydrogenase, Chain A, domain 1"/>
    <property type="match status" value="1"/>
</dbReference>
<dbReference type="Gene3D" id="3.40.309.10">
    <property type="entry name" value="Aldehyde Dehydrogenase, Chain A, domain 2"/>
    <property type="match status" value="1"/>
</dbReference>
<dbReference type="HAMAP" id="MF_00412">
    <property type="entry name" value="ProA"/>
    <property type="match status" value="1"/>
</dbReference>
<dbReference type="InterPro" id="IPR016161">
    <property type="entry name" value="Ald_DH/histidinol_DH"/>
</dbReference>
<dbReference type="InterPro" id="IPR016163">
    <property type="entry name" value="Ald_DH_C"/>
</dbReference>
<dbReference type="InterPro" id="IPR016162">
    <property type="entry name" value="Ald_DH_N"/>
</dbReference>
<dbReference type="InterPro" id="IPR015590">
    <property type="entry name" value="Aldehyde_DH_dom"/>
</dbReference>
<dbReference type="InterPro" id="IPR020593">
    <property type="entry name" value="G-glutamylP_reductase_CS"/>
</dbReference>
<dbReference type="InterPro" id="IPR012134">
    <property type="entry name" value="Glu-5-SA_DH"/>
</dbReference>
<dbReference type="InterPro" id="IPR000965">
    <property type="entry name" value="GPR_dom"/>
</dbReference>
<dbReference type="NCBIfam" id="NF001221">
    <property type="entry name" value="PRK00197.1"/>
    <property type="match status" value="1"/>
</dbReference>
<dbReference type="NCBIfam" id="TIGR00407">
    <property type="entry name" value="proA"/>
    <property type="match status" value="1"/>
</dbReference>
<dbReference type="PANTHER" id="PTHR11063:SF8">
    <property type="entry name" value="DELTA-1-PYRROLINE-5-CARBOXYLATE SYNTHASE"/>
    <property type="match status" value="1"/>
</dbReference>
<dbReference type="PANTHER" id="PTHR11063">
    <property type="entry name" value="GLUTAMATE SEMIALDEHYDE DEHYDROGENASE"/>
    <property type="match status" value="1"/>
</dbReference>
<dbReference type="Pfam" id="PF00171">
    <property type="entry name" value="Aldedh"/>
    <property type="match status" value="1"/>
</dbReference>
<dbReference type="PIRSF" id="PIRSF000151">
    <property type="entry name" value="GPR"/>
    <property type="match status" value="1"/>
</dbReference>
<dbReference type="SUPFAM" id="SSF53720">
    <property type="entry name" value="ALDH-like"/>
    <property type="match status" value="1"/>
</dbReference>
<dbReference type="PROSITE" id="PS01223">
    <property type="entry name" value="PROA"/>
    <property type="match status" value="1"/>
</dbReference>